<organism>
    <name type="scientific">Mus musculus</name>
    <name type="common">Mouse</name>
    <dbReference type="NCBI Taxonomy" id="10090"/>
    <lineage>
        <taxon>Eukaryota</taxon>
        <taxon>Metazoa</taxon>
        <taxon>Chordata</taxon>
        <taxon>Craniata</taxon>
        <taxon>Vertebrata</taxon>
        <taxon>Euteleostomi</taxon>
        <taxon>Mammalia</taxon>
        <taxon>Eutheria</taxon>
        <taxon>Euarchontoglires</taxon>
        <taxon>Glires</taxon>
        <taxon>Rodentia</taxon>
        <taxon>Myomorpha</taxon>
        <taxon>Muroidea</taxon>
        <taxon>Muridae</taxon>
        <taxon>Murinae</taxon>
        <taxon>Mus</taxon>
        <taxon>Mus</taxon>
    </lineage>
</organism>
<reference key="1">
    <citation type="journal article" date="2003" name="Gene">
        <title>Cloning, genomic organization, alternative transcripts and expression analysis of CD99L2, a novel paralog of human CD99, and identification of evolutionary conserved motifs.</title>
        <authorList>
            <person name="Suh Y.H."/>
            <person name="Shin Y.K."/>
            <person name="Kook M.-C."/>
            <person name="Oh K.I."/>
            <person name="Park W.S."/>
            <person name="Kim S.H."/>
            <person name="Lee I.-S."/>
            <person name="Park H.J."/>
            <person name="Huh T.-L."/>
            <person name="Park S.H."/>
        </authorList>
    </citation>
    <scope>NUCLEOTIDE SEQUENCE [MRNA] (ISOFORM 2)</scope>
    <scope>ALTERNATIVE SPLICING</scope>
    <scope>TISSUE SPECIFICITY</scope>
</reference>
<reference key="2">
    <citation type="journal article" date="2007" name="Cell Commun. Adhes.">
        <title>The murine CD99-related molecule CD99-like 2 (CD99L2) is an adhesion molecule involved in the inflammatory response.</title>
        <authorList>
            <person name="Schenkel A.R."/>
            <person name="Dufour E.M."/>
            <person name="Chew T.W."/>
            <person name="Sorg E."/>
            <person name="Muller W.A."/>
        </authorList>
    </citation>
    <scope>NUCLEOTIDE SEQUENCE [MRNA] (ISOFORM 1)</scope>
    <scope>FUNCTION</scope>
    <scope>TISSUE SPECIFICITY</scope>
    <source>
        <strain>C57BL/6J</strain>
        <tissue>Thymus</tissue>
    </source>
</reference>
<reference key="3">
    <citation type="journal article" date="2005" name="Science">
        <title>The transcriptional landscape of the mammalian genome.</title>
        <authorList>
            <person name="Carninci P."/>
            <person name="Kasukawa T."/>
            <person name="Katayama S."/>
            <person name="Gough J."/>
            <person name="Frith M.C."/>
            <person name="Maeda N."/>
            <person name="Oyama R."/>
            <person name="Ravasi T."/>
            <person name="Lenhard B."/>
            <person name="Wells C."/>
            <person name="Kodzius R."/>
            <person name="Shimokawa K."/>
            <person name="Bajic V.B."/>
            <person name="Brenner S.E."/>
            <person name="Batalov S."/>
            <person name="Forrest A.R."/>
            <person name="Zavolan M."/>
            <person name="Davis M.J."/>
            <person name="Wilming L.G."/>
            <person name="Aidinis V."/>
            <person name="Allen J.E."/>
            <person name="Ambesi-Impiombato A."/>
            <person name="Apweiler R."/>
            <person name="Aturaliya R.N."/>
            <person name="Bailey T.L."/>
            <person name="Bansal M."/>
            <person name="Baxter L."/>
            <person name="Beisel K.W."/>
            <person name="Bersano T."/>
            <person name="Bono H."/>
            <person name="Chalk A.M."/>
            <person name="Chiu K.P."/>
            <person name="Choudhary V."/>
            <person name="Christoffels A."/>
            <person name="Clutterbuck D.R."/>
            <person name="Crowe M.L."/>
            <person name="Dalla E."/>
            <person name="Dalrymple B.P."/>
            <person name="de Bono B."/>
            <person name="Della Gatta G."/>
            <person name="di Bernardo D."/>
            <person name="Down T."/>
            <person name="Engstrom P."/>
            <person name="Fagiolini M."/>
            <person name="Faulkner G."/>
            <person name="Fletcher C.F."/>
            <person name="Fukushima T."/>
            <person name="Furuno M."/>
            <person name="Futaki S."/>
            <person name="Gariboldi M."/>
            <person name="Georgii-Hemming P."/>
            <person name="Gingeras T.R."/>
            <person name="Gojobori T."/>
            <person name="Green R.E."/>
            <person name="Gustincich S."/>
            <person name="Harbers M."/>
            <person name="Hayashi Y."/>
            <person name="Hensch T.K."/>
            <person name="Hirokawa N."/>
            <person name="Hill D."/>
            <person name="Huminiecki L."/>
            <person name="Iacono M."/>
            <person name="Ikeo K."/>
            <person name="Iwama A."/>
            <person name="Ishikawa T."/>
            <person name="Jakt M."/>
            <person name="Kanapin A."/>
            <person name="Katoh M."/>
            <person name="Kawasawa Y."/>
            <person name="Kelso J."/>
            <person name="Kitamura H."/>
            <person name="Kitano H."/>
            <person name="Kollias G."/>
            <person name="Krishnan S.P."/>
            <person name="Kruger A."/>
            <person name="Kummerfeld S.K."/>
            <person name="Kurochkin I.V."/>
            <person name="Lareau L.F."/>
            <person name="Lazarevic D."/>
            <person name="Lipovich L."/>
            <person name="Liu J."/>
            <person name="Liuni S."/>
            <person name="McWilliam S."/>
            <person name="Madan Babu M."/>
            <person name="Madera M."/>
            <person name="Marchionni L."/>
            <person name="Matsuda H."/>
            <person name="Matsuzawa S."/>
            <person name="Miki H."/>
            <person name="Mignone F."/>
            <person name="Miyake S."/>
            <person name="Morris K."/>
            <person name="Mottagui-Tabar S."/>
            <person name="Mulder N."/>
            <person name="Nakano N."/>
            <person name="Nakauchi H."/>
            <person name="Ng P."/>
            <person name="Nilsson R."/>
            <person name="Nishiguchi S."/>
            <person name="Nishikawa S."/>
            <person name="Nori F."/>
            <person name="Ohara O."/>
            <person name="Okazaki Y."/>
            <person name="Orlando V."/>
            <person name="Pang K.C."/>
            <person name="Pavan W.J."/>
            <person name="Pavesi G."/>
            <person name="Pesole G."/>
            <person name="Petrovsky N."/>
            <person name="Piazza S."/>
            <person name="Reed J."/>
            <person name="Reid J.F."/>
            <person name="Ring B.Z."/>
            <person name="Ringwald M."/>
            <person name="Rost B."/>
            <person name="Ruan Y."/>
            <person name="Salzberg S.L."/>
            <person name="Sandelin A."/>
            <person name="Schneider C."/>
            <person name="Schoenbach C."/>
            <person name="Sekiguchi K."/>
            <person name="Semple C.A."/>
            <person name="Seno S."/>
            <person name="Sessa L."/>
            <person name="Sheng Y."/>
            <person name="Shibata Y."/>
            <person name="Shimada H."/>
            <person name="Shimada K."/>
            <person name="Silva D."/>
            <person name="Sinclair B."/>
            <person name="Sperling S."/>
            <person name="Stupka E."/>
            <person name="Sugiura K."/>
            <person name="Sultana R."/>
            <person name="Takenaka Y."/>
            <person name="Taki K."/>
            <person name="Tammoja K."/>
            <person name="Tan S.L."/>
            <person name="Tang S."/>
            <person name="Taylor M.S."/>
            <person name="Tegner J."/>
            <person name="Teichmann S.A."/>
            <person name="Ueda H.R."/>
            <person name="van Nimwegen E."/>
            <person name="Verardo R."/>
            <person name="Wei C.L."/>
            <person name="Yagi K."/>
            <person name="Yamanishi H."/>
            <person name="Zabarovsky E."/>
            <person name="Zhu S."/>
            <person name="Zimmer A."/>
            <person name="Hide W."/>
            <person name="Bult C."/>
            <person name="Grimmond S.M."/>
            <person name="Teasdale R.D."/>
            <person name="Liu E.T."/>
            <person name="Brusic V."/>
            <person name="Quackenbush J."/>
            <person name="Wahlestedt C."/>
            <person name="Mattick J.S."/>
            <person name="Hume D.A."/>
            <person name="Kai C."/>
            <person name="Sasaki D."/>
            <person name="Tomaru Y."/>
            <person name="Fukuda S."/>
            <person name="Kanamori-Katayama M."/>
            <person name="Suzuki M."/>
            <person name="Aoki J."/>
            <person name="Arakawa T."/>
            <person name="Iida J."/>
            <person name="Imamura K."/>
            <person name="Itoh M."/>
            <person name="Kato T."/>
            <person name="Kawaji H."/>
            <person name="Kawagashira N."/>
            <person name="Kawashima T."/>
            <person name="Kojima M."/>
            <person name="Kondo S."/>
            <person name="Konno H."/>
            <person name="Nakano K."/>
            <person name="Ninomiya N."/>
            <person name="Nishio T."/>
            <person name="Okada M."/>
            <person name="Plessy C."/>
            <person name="Shibata K."/>
            <person name="Shiraki T."/>
            <person name="Suzuki S."/>
            <person name="Tagami M."/>
            <person name="Waki K."/>
            <person name="Watahiki A."/>
            <person name="Okamura-Oho Y."/>
            <person name="Suzuki H."/>
            <person name="Kawai J."/>
            <person name="Hayashizaki Y."/>
        </authorList>
    </citation>
    <scope>NUCLEOTIDE SEQUENCE [LARGE SCALE MRNA] (ISOFORM 1)</scope>
    <source>
        <strain>C57BL/6J</strain>
        <tissue>Aorta</tissue>
        <tissue>Mammary gland</tissue>
    </source>
</reference>
<reference key="4">
    <citation type="journal article" date="2009" name="PLoS Biol.">
        <title>Lineage-specific biology revealed by a finished genome assembly of the mouse.</title>
        <authorList>
            <person name="Church D.M."/>
            <person name="Goodstadt L."/>
            <person name="Hillier L.W."/>
            <person name="Zody M.C."/>
            <person name="Goldstein S."/>
            <person name="She X."/>
            <person name="Bult C.J."/>
            <person name="Agarwala R."/>
            <person name="Cherry J.L."/>
            <person name="DiCuccio M."/>
            <person name="Hlavina W."/>
            <person name="Kapustin Y."/>
            <person name="Meric P."/>
            <person name="Maglott D."/>
            <person name="Birtle Z."/>
            <person name="Marques A.C."/>
            <person name="Graves T."/>
            <person name="Zhou S."/>
            <person name="Teague B."/>
            <person name="Potamousis K."/>
            <person name="Churas C."/>
            <person name="Place M."/>
            <person name="Herschleb J."/>
            <person name="Runnheim R."/>
            <person name="Forrest D."/>
            <person name="Amos-Landgraf J."/>
            <person name="Schwartz D.C."/>
            <person name="Cheng Z."/>
            <person name="Lindblad-Toh K."/>
            <person name="Eichler E.E."/>
            <person name="Ponting C.P."/>
        </authorList>
    </citation>
    <scope>NUCLEOTIDE SEQUENCE [LARGE SCALE GENOMIC DNA]</scope>
    <source>
        <strain>C57BL/6J</strain>
    </source>
</reference>
<reference key="5">
    <citation type="journal article" date="2004" name="Genome Res.">
        <title>The status, quality, and expansion of the NIH full-length cDNA project: the Mammalian Gene Collection (MGC).</title>
        <authorList>
            <consortium name="The MGC Project Team"/>
        </authorList>
    </citation>
    <scope>NUCLEOTIDE SEQUENCE [LARGE SCALE MRNA]</scope>
    <source>
        <strain>Czech II</strain>
        <tissue>Mammary tumor</tissue>
    </source>
</reference>
<reference key="6">
    <citation type="journal article" date="2007" name="Blood">
        <title>A CD99-related antigen on endothelial cells mediates neutrophil but not lymphocyte extravasation in vivo.</title>
        <authorList>
            <person name="Bixel M.G."/>
            <person name="Petri B."/>
            <person name="Khandoga A.G."/>
            <person name="Khandoga A."/>
            <person name="Wolburg-Buchholz K."/>
            <person name="Wolburg H."/>
            <person name="Marz S."/>
            <person name="Krombach F."/>
            <person name="Vestweber D."/>
        </authorList>
    </citation>
    <scope>FUNCTION</scope>
    <scope>SUBCELLULAR LOCATION</scope>
    <scope>TISSUE SPECIFICITY</scope>
    <scope>GLYCOSYLATION</scope>
</reference>
<reference key="7">
    <citation type="journal article" date="2010" name="Blood">
        <title>CD99 and CD99L2 act at the same site as, but independently of, PECAM-1 during leukocyte diapedesis.</title>
        <authorList>
            <person name="Bixel M.G."/>
            <person name="Li H."/>
            <person name="Petri B."/>
            <person name="Khandoga A.G."/>
            <person name="Khandoga A."/>
            <person name="Zarbock A."/>
            <person name="Wolburg-Buchholz K."/>
            <person name="Wolburg H."/>
            <person name="Sorokin L."/>
            <person name="Zeuschner D."/>
            <person name="Maerz S."/>
            <person name="Butz S."/>
            <person name="Krombach F."/>
            <person name="Vestweber D."/>
        </authorList>
    </citation>
    <scope>FUNCTION</scope>
</reference>
<reference key="8">
    <citation type="journal article" date="2010" name="Cell">
        <title>A tissue-specific atlas of mouse protein phosphorylation and expression.</title>
        <authorList>
            <person name="Huttlin E.L."/>
            <person name="Jedrychowski M.P."/>
            <person name="Elias J.E."/>
            <person name="Goswami T."/>
            <person name="Rad R."/>
            <person name="Beausoleil S.A."/>
            <person name="Villen J."/>
            <person name="Haas W."/>
            <person name="Sowa M.E."/>
            <person name="Gygi S.P."/>
        </authorList>
    </citation>
    <scope>IDENTIFICATION BY MASS SPECTROMETRY [LARGE SCALE ANALYSIS]</scope>
    <source>
        <tissue>Brain</tissue>
        <tissue>Lung</tissue>
    </source>
</reference>
<evidence type="ECO:0000250" key="1"/>
<evidence type="ECO:0000250" key="2">
    <source>
        <dbReference type="UniProtKB" id="Q8TCZ2"/>
    </source>
</evidence>
<evidence type="ECO:0000255" key="3"/>
<evidence type="ECO:0000256" key="4">
    <source>
        <dbReference type="SAM" id="MobiDB-lite"/>
    </source>
</evidence>
<evidence type="ECO:0000269" key="5">
    <source>
    </source>
</evidence>
<evidence type="ECO:0000269" key="6">
    <source>
    </source>
</evidence>
<evidence type="ECO:0000269" key="7">
    <source>
    </source>
</evidence>
<evidence type="ECO:0000269" key="8">
    <source>
    </source>
</evidence>
<evidence type="ECO:0000303" key="9">
    <source>
    </source>
</evidence>
<evidence type="ECO:0000305" key="10"/>
<comment type="function">
    <text evidence="6 7 8">Plays a role in a late step of leukocyte extravasation helping cells to overcome the endothelial basement membrane. Acts at the same site as, but independently of, PECAM1. Homophilic adhesion molecule, but these interactions may not be required for cell aggregation.</text>
</comment>
<comment type="subcellular location">
    <subcellularLocation>
        <location evidence="1">Cell membrane</location>
        <topology evidence="1">Single-pass type I membrane protein</topology>
        <orientation evidence="1">Extracellular side</orientation>
    </subcellularLocation>
    <subcellularLocation>
        <location evidence="6">Cell junction</location>
    </subcellularLocation>
    <subcellularLocation>
        <location evidence="2">Secreted</location>
    </subcellularLocation>
    <text>Concentrated at cell-cell contacts in cultured endothelial cells.</text>
</comment>
<comment type="alternative products">
    <event type="alternative splicing"/>
    <isoform>
        <id>Q8BIF0-1</id>
        <name>1</name>
        <name>Long isoform</name>
        <sequence type="displayed"/>
    </isoform>
    <isoform>
        <id>Q8BIF0-2</id>
        <name>2</name>
        <name>Short isoform</name>
        <sequence type="described" ref="VSP_034186"/>
    </isoform>
</comment>
<comment type="tissue specificity">
    <text evidence="5 6 7">Highly expressed in the nervous system, including brain, dentate nucleus of hippocampus, granular and Purkinje cells of cerebellum, brain stem nucleus and choroid plexus. Expressed in peripheral blood T- and B-cells and neutrophils (at protein level). Almost undetectable in bone marrow-derived neutrophils (at protein level). Also expressed in thymocytes (at protein level) with higher expression in cortical thymocytes than in medullary thymocytes. Expressed at high levels in testis (mostly in germ cells and Sertoli cells) and ovary (mostly in granulosa cells). Expressed in lung, heart, kidney and liver (at protein level); however, expression in heart, kidney and liver seems restricted to endothelial cells (at protein level). Highly expressed in endothelial cells and to a lower level in vascular smooth muscle cells (at protein level). Low expression in spleen.</text>
</comment>
<comment type="developmental stage">
    <text>At 12.5 dpc, expressed in most tissues, especially in the nervous system, including the cerebral cortex, cerebellum, spinal cord and ganglion. There is no change in expression pattern from 12.5 dpc to neonatal day 1. Highly expressed in the subventricular zone and cortical plate of fetal brain and in the dorsal root ganglion of the peripheral nervous system. Except in the nervous system, expression in adult tissues is weaker than in fetal ones.</text>
</comment>
<comment type="PTM">
    <text evidence="6">O-glycosylated.</text>
</comment>
<comment type="miscellaneous">
    <molecule>Isoform 2</molecule>
    <text evidence="10">Seems to be the major transcript.</text>
</comment>
<comment type="similarity">
    <text evidence="10">Belongs to the CD99 family.</text>
</comment>
<comment type="sequence caution" evidence="10">
    <conflict type="erroneous gene model prediction">
        <sequence resource="EMBL-CDS" id="CAM25451"/>
    </conflict>
</comment>
<name>C99L2_MOUSE</name>
<feature type="signal peptide" evidence="3">
    <location>
        <begin position="1"/>
        <end position="25"/>
    </location>
</feature>
<feature type="chain" id="PRO_0000340093" description="CD99 antigen-like protein 2">
    <location>
        <begin position="26"/>
        <end position="237"/>
    </location>
</feature>
<feature type="topological domain" description="Extracellular" evidence="3">
    <location>
        <begin position="26"/>
        <end position="161"/>
    </location>
</feature>
<feature type="transmembrane region" description="Helical" evidence="3">
    <location>
        <begin position="162"/>
        <end position="182"/>
    </location>
</feature>
<feature type="topological domain" description="Cytoplasmic" evidence="3">
    <location>
        <begin position="183"/>
        <end position="237"/>
    </location>
</feature>
<feature type="region of interest" description="Disordered" evidence="4">
    <location>
        <begin position="47"/>
        <end position="157"/>
    </location>
</feature>
<feature type="region of interest" description="Disordered" evidence="4">
    <location>
        <begin position="218"/>
        <end position="237"/>
    </location>
</feature>
<feature type="compositionally biased region" description="Low complexity" evidence="4">
    <location>
        <begin position="51"/>
        <end position="66"/>
    </location>
</feature>
<feature type="compositionally biased region" description="Low complexity" evidence="4">
    <location>
        <begin position="74"/>
        <end position="84"/>
    </location>
</feature>
<feature type="compositionally biased region" description="Basic and acidic residues" evidence="4">
    <location>
        <begin position="102"/>
        <end position="111"/>
    </location>
</feature>
<feature type="compositionally biased region" description="Polar residues" evidence="4">
    <location>
        <begin position="218"/>
        <end position="227"/>
    </location>
</feature>
<feature type="compositionally biased region" description="Pro residues" evidence="4">
    <location>
        <begin position="228"/>
        <end position="237"/>
    </location>
</feature>
<feature type="glycosylation site" description="O-linked (Xyl...) (chondroitin sulfate) serine" evidence="2">
    <location>
        <position position="154"/>
    </location>
</feature>
<feature type="splice variant" id="VSP_034186" description="In isoform 2." evidence="9">
    <location>
        <begin position="49"/>
        <end position="71"/>
    </location>
</feature>
<proteinExistence type="evidence at protein level"/>
<accession>Q8BIF0</accession>
<accession>A2AP77</accession>
<accession>Q8R447</accession>
<dbReference type="EMBL" id="AY078163">
    <property type="protein sequence ID" value="AAL86615.1"/>
    <property type="molecule type" value="mRNA"/>
</dbReference>
<dbReference type="EMBL" id="EF516990">
    <property type="protein sequence ID" value="ABP73253.1"/>
    <property type="molecule type" value="mRNA"/>
</dbReference>
<dbReference type="EMBL" id="AK080225">
    <property type="protein sequence ID" value="BAC37853.1"/>
    <property type="molecule type" value="mRNA"/>
</dbReference>
<dbReference type="EMBL" id="AK166275">
    <property type="protein sequence ID" value="BAE38674.1"/>
    <property type="molecule type" value="mRNA"/>
</dbReference>
<dbReference type="EMBL" id="AL833776">
    <property type="protein sequence ID" value="CAM25449.1"/>
    <property type="molecule type" value="Genomic_DNA"/>
</dbReference>
<dbReference type="EMBL" id="AL772294">
    <property type="protein sequence ID" value="CAM25449.1"/>
    <property type="status" value="JOINED"/>
    <property type="molecule type" value="Genomic_DNA"/>
</dbReference>
<dbReference type="EMBL" id="AL833776">
    <property type="protein sequence ID" value="CAM25450.1"/>
    <property type="molecule type" value="Genomic_DNA"/>
</dbReference>
<dbReference type="EMBL" id="AL772294">
    <property type="protein sequence ID" value="CAM25450.1"/>
    <property type="status" value="JOINED"/>
    <property type="molecule type" value="Genomic_DNA"/>
</dbReference>
<dbReference type="EMBL" id="AL833776">
    <property type="protein sequence ID" value="CAM25451.1"/>
    <property type="status" value="ALT_SEQ"/>
    <property type="molecule type" value="Genomic_DNA"/>
</dbReference>
<dbReference type="EMBL" id="AL772294">
    <property type="protein sequence ID" value="CAM25451.1"/>
    <property type="status" value="JOINED"/>
    <property type="molecule type" value="Genomic_DNA"/>
</dbReference>
<dbReference type="EMBL" id="BC031736">
    <property type="protein sequence ID" value="AAH31736.1"/>
    <property type="molecule type" value="mRNA"/>
</dbReference>
<dbReference type="CCDS" id="CCDS30179.1">
    <molecule id="Q8BIF0-2"/>
</dbReference>
<dbReference type="CCDS" id="CCDS57761.1">
    <molecule id="Q8BIF0-1"/>
</dbReference>
<dbReference type="RefSeq" id="NP_001186278.1">
    <molecule id="Q8BIF0-1"/>
    <property type="nucleotide sequence ID" value="NM_001199349.1"/>
</dbReference>
<dbReference type="RefSeq" id="NP_612182.1">
    <molecule id="Q8BIF0-2"/>
    <property type="nucleotide sequence ID" value="NM_138309.3"/>
</dbReference>
<dbReference type="BioGRID" id="228600">
    <property type="interactions" value="1"/>
</dbReference>
<dbReference type="FunCoup" id="Q8BIF0">
    <property type="interactions" value="568"/>
</dbReference>
<dbReference type="STRING" id="10090.ENSMUSP00000042606"/>
<dbReference type="GlyGen" id="Q8BIF0">
    <property type="glycosylation" value="2 sites, 1 O-linked glycan (1 site)"/>
</dbReference>
<dbReference type="iPTMnet" id="Q8BIF0"/>
<dbReference type="PhosphoSitePlus" id="Q8BIF0"/>
<dbReference type="SwissPalm" id="Q8BIF0"/>
<dbReference type="PeptideAtlas" id="Q8BIF0"/>
<dbReference type="ProteomicsDB" id="265269">
    <molecule id="Q8BIF0-1"/>
</dbReference>
<dbReference type="ProteomicsDB" id="265270">
    <molecule id="Q8BIF0-2"/>
</dbReference>
<dbReference type="Pumba" id="Q8BIF0"/>
<dbReference type="Antibodypedia" id="50585">
    <property type="antibodies" value="170 antibodies from 23 providers"/>
</dbReference>
<dbReference type="DNASU" id="171486"/>
<dbReference type="Ensembl" id="ENSMUST00000037391.12">
    <molecule id="Q8BIF0-1"/>
    <property type="protein sequence ID" value="ENSMUSP00000042606.6"/>
    <property type="gene ID" value="ENSMUSG00000035776.15"/>
</dbReference>
<dbReference type="Ensembl" id="ENSMUST00000080035.11">
    <molecule id="Q8BIF0-2"/>
    <property type="protein sequence ID" value="ENSMUSP00000078944.5"/>
    <property type="gene ID" value="ENSMUSG00000035776.15"/>
</dbReference>
<dbReference type="GeneID" id="171486"/>
<dbReference type="KEGG" id="mmu:171486"/>
<dbReference type="UCSC" id="uc009tjz.2">
    <molecule id="Q8BIF0-2"/>
    <property type="organism name" value="mouse"/>
</dbReference>
<dbReference type="UCSC" id="uc009tka.2">
    <molecule id="Q8BIF0-1"/>
    <property type="organism name" value="mouse"/>
</dbReference>
<dbReference type="AGR" id="MGI:2177151"/>
<dbReference type="CTD" id="83692"/>
<dbReference type="MGI" id="MGI:2177151">
    <property type="gene designation" value="Cd99l2"/>
</dbReference>
<dbReference type="VEuPathDB" id="HostDB:ENSMUSG00000035776"/>
<dbReference type="eggNOG" id="ENOG502RZ6C">
    <property type="taxonomic scope" value="Eukaryota"/>
</dbReference>
<dbReference type="GeneTree" id="ENSGT00940000154344"/>
<dbReference type="InParanoid" id="Q8BIF0"/>
<dbReference type="OMA" id="KPDNSFW"/>
<dbReference type="OrthoDB" id="8961553at2759"/>
<dbReference type="PhylomeDB" id="Q8BIF0"/>
<dbReference type="TreeFam" id="TF332323"/>
<dbReference type="BioGRID-ORCS" id="171486">
    <property type="hits" value="3 hits in 78 CRISPR screens"/>
</dbReference>
<dbReference type="ChiTaRS" id="Cd99l2">
    <property type="organism name" value="mouse"/>
</dbReference>
<dbReference type="PRO" id="PR:Q8BIF0"/>
<dbReference type="Proteomes" id="UP000000589">
    <property type="component" value="Chromosome X"/>
</dbReference>
<dbReference type="RNAct" id="Q8BIF0">
    <property type="molecule type" value="protein"/>
</dbReference>
<dbReference type="Bgee" id="ENSMUSG00000035776">
    <property type="expression patterns" value="Expressed in rostral migratory stream and 270 other cell types or tissues"/>
</dbReference>
<dbReference type="ExpressionAtlas" id="Q8BIF0">
    <property type="expression patterns" value="baseline and differential"/>
</dbReference>
<dbReference type="GO" id="GO:0005912">
    <property type="term" value="C:adherens junction"/>
    <property type="evidence" value="ECO:0000314"/>
    <property type="project" value="MGI"/>
</dbReference>
<dbReference type="GO" id="GO:0009986">
    <property type="term" value="C:cell surface"/>
    <property type="evidence" value="ECO:0000314"/>
    <property type="project" value="MGI"/>
</dbReference>
<dbReference type="GO" id="GO:0005576">
    <property type="term" value="C:extracellular region"/>
    <property type="evidence" value="ECO:0007669"/>
    <property type="project" value="UniProtKB-SubCell"/>
</dbReference>
<dbReference type="GO" id="GO:0005886">
    <property type="term" value="C:plasma membrane"/>
    <property type="evidence" value="ECO:0000304"/>
    <property type="project" value="Reactome"/>
</dbReference>
<dbReference type="GO" id="GO:0007155">
    <property type="term" value="P:cell adhesion"/>
    <property type="evidence" value="ECO:0007669"/>
    <property type="project" value="UniProtKB-KW"/>
</dbReference>
<dbReference type="GO" id="GO:0050904">
    <property type="term" value="P:diapedesis"/>
    <property type="evidence" value="ECO:0000315"/>
    <property type="project" value="MGI"/>
</dbReference>
<dbReference type="GO" id="GO:0034109">
    <property type="term" value="P:homotypic cell-cell adhesion"/>
    <property type="evidence" value="ECO:0000314"/>
    <property type="project" value="MGI"/>
</dbReference>
<dbReference type="GO" id="GO:2000391">
    <property type="term" value="P:positive regulation of neutrophil extravasation"/>
    <property type="evidence" value="ECO:0000315"/>
    <property type="project" value="MGI"/>
</dbReference>
<dbReference type="GO" id="GO:2000409">
    <property type="term" value="P:positive regulation of T cell extravasation"/>
    <property type="evidence" value="ECO:0000315"/>
    <property type="project" value="MGI"/>
</dbReference>
<dbReference type="InterPro" id="IPR022078">
    <property type="entry name" value="CD99L2"/>
</dbReference>
<dbReference type="PANTHER" id="PTHR15076:SF12">
    <property type="entry name" value="CD99 ANTIGEN-LIKE PROTEIN 2"/>
    <property type="match status" value="1"/>
</dbReference>
<dbReference type="PANTHER" id="PTHR15076">
    <property type="entry name" value="CD99/MIC2 PROTEIN RELATED"/>
    <property type="match status" value="1"/>
</dbReference>
<dbReference type="Pfam" id="PF12301">
    <property type="entry name" value="CD99L2"/>
    <property type="match status" value="1"/>
</dbReference>
<protein>
    <recommendedName>
        <fullName>CD99 antigen-like protein 2</fullName>
    </recommendedName>
    <alternativeName>
        <fullName>MIC2-like protein 1</fullName>
    </alternativeName>
    <cdAntigenName>CD99</cdAntigenName>
</protein>
<gene>
    <name type="primary">Cd99l2</name>
    <name type="synonym">Mic2l1</name>
</gene>
<sequence length="237" mass="25463">MVARLTAFLVCLVFSLATLVQRGYGDTDGFNLEDALKETSSVKQRWDHFSTTTRRPVTTRAPANPAERWDHVATTTTRRPGTTRAPSNPMELDGFDLEDALDDRNDLDGPKKPSAGEAGGWSDKDLEDIVEGGGYKPDKNKGGGGYGSNDDPGSGISTETGTIAGVASALAMALIGAVSSYISYQQKKFCFSIQQGLNADYVKGENLEAVVCEEPQVTYSKQETQSAEPPPPEPPRI</sequence>
<keyword id="KW-0025">Alternative splicing</keyword>
<keyword id="KW-0130">Cell adhesion</keyword>
<keyword id="KW-0965">Cell junction</keyword>
<keyword id="KW-1003">Cell membrane</keyword>
<keyword id="KW-0325">Glycoprotein</keyword>
<keyword id="KW-0472">Membrane</keyword>
<keyword id="KW-0654">Proteoglycan</keyword>
<keyword id="KW-1185">Reference proteome</keyword>
<keyword id="KW-0964">Secreted</keyword>
<keyword id="KW-0732">Signal</keyword>
<keyword id="KW-0812">Transmembrane</keyword>
<keyword id="KW-1133">Transmembrane helix</keyword>